<reference key="1">
    <citation type="journal article" date="1992" name="Chem. Pharm. Bull.">
        <title>Nucleotide sequences of membrane-bound hydrogenase gene in Alcaligenes hydrogenophilus.</title>
        <authorList>
            <person name="Yagi K."/>
            <person name="Seto T."/>
            <person name="Terakado M."/>
            <person name="Umeda F."/>
            <person name="Doi T."/>
            <person name="Imanishi T."/>
            <person name="Miura Y."/>
        </authorList>
    </citation>
    <scope>NUCLEOTIDE SEQUENCE [GENOMIC DNA]</scope>
</reference>
<protein>
    <recommendedName>
        <fullName>Uptake hydrogenase large subunit</fullName>
        <ecNumber>1.12.99.6</ecNumber>
    </recommendedName>
    <alternativeName>
        <fullName>Hydrogenlyase</fullName>
    </alternativeName>
    <alternativeName>
        <fullName>Membrane-bound hydrogenase large subunit</fullName>
    </alternativeName>
</protein>
<accession>P33374</accession>
<feature type="chain" id="PRO_0000199707" description="Uptake hydrogenase large subunit">
    <location>
        <begin position="1"/>
        <end position="621"/>
    </location>
</feature>
<feature type="binding site" evidence="2">
    <location>
        <position position="75"/>
    </location>
    <ligand>
        <name>Ni(2+)</name>
        <dbReference type="ChEBI" id="CHEBI:49786"/>
    </ligand>
</feature>
<feature type="binding site" evidence="2">
    <location>
        <position position="78"/>
    </location>
    <ligand>
        <name>Ni(2+)</name>
        <dbReference type="ChEBI" id="CHEBI:49786"/>
    </ligand>
</feature>
<feature type="binding site" evidence="2">
    <location>
        <position position="600"/>
    </location>
    <ligand>
        <name>Ni(2+)</name>
        <dbReference type="ChEBI" id="CHEBI:49786"/>
    </ligand>
</feature>
<feature type="binding site" evidence="2">
    <location>
        <position position="603"/>
    </location>
    <ligand>
        <name>Ni(2+)</name>
        <dbReference type="ChEBI" id="CHEBI:49786"/>
    </ligand>
</feature>
<proteinExistence type="inferred from homology"/>
<sequence length="621" mass="68925">MATYETQGFKLNDSGRRIIVDPVTRIEGHMRCEVNLDANNVIRNAVSTGTMWRGLEVILKRADPADAWAFVERICRVCTGCHALASVRAVEDALGIKIPKNAHLIREMMAKTLQVHDHVVHFYHLHALDWVDVVSALNADPKRTSALQQTVSPAHPLSSPGYFRDVQIRLKKFVESGQLGPFMNGYWGNPAYKLPPEANLMAVTHYLEALDLQKEWVKIHTIFGGKNPHPNYLVGGMPCVDSNLDGSGAAGAPLNMERLNFVRARIEEAIEFVKNVYLPDVLAIGTIYKDAGWLYGGGLSALNVMDYGTYPRVNYDPTTDQLPGGAILNGNWDEIFPVDPRDPEQVQEFVAHSWYKYADETKGLHPWDGVTEPNFVLGPKAVGTPTDIKQLDEDAKYSWIKVAALAGHAMEVGPLVALHPRIRARAEDPKSYRAHYLREQVENSARAINTGIPQALGLKQTDYTVKQLLPTTIGRTLARALEAQYCGNMMLDDWHEMMANIKAGDLTTANVDKWEPSAWPKEAKGVGHVAAPRGACGHWIRIKDGKIENYQCVVPTTWNGSPRDSKGQIGAFEASLMNTPMAKPEEPVEILRTVHSFDPCLACSTHVIRPDGQERVVVKVR</sequence>
<dbReference type="EC" id="1.12.99.6"/>
<dbReference type="EMBL" id="S56898">
    <property type="protein sequence ID" value="AAB25780.1"/>
    <property type="status" value="ALT_SEQ"/>
    <property type="molecule type" value="Genomic_DNA"/>
</dbReference>
<dbReference type="PIR" id="JH0776">
    <property type="entry name" value="JH0776"/>
</dbReference>
<dbReference type="SMR" id="P33374"/>
<dbReference type="GO" id="GO:0005886">
    <property type="term" value="C:plasma membrane"/>
    <property type="evidence" value="ECO:0007669"/>
    <property type="project" value="UniProtKB-SubCell"/>
</dbReference>
<dbReference type="GO" id="GO:0008901">
    <property type="term" value="F:ferredoxin hydrogenase activity"/>
    <property type="evidence" value="ECO:0007669"/>
    <property type="project" value="InterPro"/>
</dbReference>
<dbReference type="GO" id="GO:0033748">
    <property type="term" value="F:hydrogenase (acceptor) activity"/>
    <property type="evidence" value="ECO:0007669"/>
    <property type="project" value="UniProtKB-EC"/>
</dbReference>
<dbReference type="GO" id="GO:0016151">
    <property type="term" value="F:nickel cation binding"/>
    <property type="evidence" value="ECO:0007669"/>
    <property type="project" value="InterPro"/>
</dbReference>
<dbReference type="FunFam" id="1.10.645.10:FF:000002">
    <property type="entry name" value="Hydrogenase 2 large subunit"/>
    <property type="match status" value="1"/>
</dbReference>
<dbReference type="Gene3D" id="1.10.645.10">
    <property type="entry name" value="Cytochrome-c3 Hydrogenase, chain B"/>
    <property type="match status" value="1"/>
</dbReference>
<dbReference type="InterPro" id="IPR001501">
    <property type="entry name" value="Ni-dep_hyd_lsu"/>
</dbReference>
<dbReference type="InterPro" id="IPR018194">
    <property type="entry name" value="Ni-dep_hyd_lsu_Ni_BS"/>
</dbReference>
<dbReference type="InterPro" id="IPR029014">
    <property type="entry name" value="NiFe-Hase_large"/>
</dbReference>
<dbReference type="InterPro" id="IPR050867">
    <property type="entry name" value="NiFe/NiFeSe_hydrgnase_LSU"/>
</dbReference>
<dbReference type="PANTHER" id="PTHR42958">
    <property type="entry name" value="HYDROGENASE-2 LARGE CHAIN"/>
    <property type="match status" value="1"/>
</dbReference>
<dbReference type="PANTHER" id="PTHR42958:SF2">
    <property type="entry name" value="UPTAKE HYDROGENASE LARGE SUBUNIT"/>
    <property type="match status" value="1"/>
</dbReference>
<dbReference type="Pfam" id="PF00374">
    <property type="entry name" value="NiFeSe_Hases"/>
    <property type="match status" value="1"/>
</dbReference>
<dbReference type="SUPFAM" id="SSF56762">
    <property type="entry name" value="HydB/Nqo4-like"/>
    <property type="match status" value="1"/>
</dbReference>
<dbReference type="PROSITE" id="PS00507">
    <property type="entry name" value="NI_HGENASE_L_1"/>
    <property type="match status" value="1"/>
</dbReference>
<dbReference type="PROSITE" id="PS00508">
    <property type="entry name" value="NI_HGENASE_L_2"/>
    <property type="match status" value="1"/>
</dbReference>
<keyword id="KW-1003">Cell membrane</keyword>
<keyword id="KW-0472">Membrane</keyword>
<keyword id="KW-0479">Metal-binding</keyword>
<keyword id="KW-0533">Nickel</keyword>
<keyword id="KW-0560">Oxidoreductase</keyword>
<evidence type="ECO:0000250" key="1"/>
<evidence type="ECO:0000255" key="2"/>
<evidence type="ECO:0000305" key="3"/>
<organism>
    <name type="scientific">Alcaligenes hydrogenophilus</name>
    <dbReference type="NCBI Taxonomy" id="516"/>
    <lineage>
        <taxon>Bacteria</taxon>
        <taxon>Pseudomonadati</taxon>
        <taxon>Pseudomonadota</taxon>
        <taxon>Betaproteobacteria</taxon>
        <taxon>Burkholderiales</taxon>
        <taxon>Alcaligenaceae</taxon>
        <taxon>Alcaligenes</taxon>
    </lineage>
</organism>
<comment type="function">
    <text>This enzyme recycles the H(2) produced by nitrogenase to increase the production of ATP and to protect nitrogenase against inhibition or damage by O(2) under carbon- or phosphate-limited conditions.</text>
</comment>
<comment type="catalytic activity">
    <reaction>
        <text>H2 + A = AH2</text>
        <dbReference type="Rhea" id="RHEA:12116"/>
        <dbReference type="ChEBI" id="CHEBI:13193"/>
        <dbReference type="ChEBI" id="CHEBI:17499"/>
        <dbReference type="ChEBI" id="CHEBI:18276"/>
        <dbReference type="EC" id="1.12.99.6"/>
    </reaction>
</comment>
<comment type="cofactor">
    <cofactor evidence="1">
        <name>Ni(2+)</name>
        <dbReference type="ChEBI" id="CHEBI:49786"/>
    </cofactor>
    <text evidence="1">Binds 1 nickel ion per subunit.</text>
</comment>
<comment type="subunit">
    <text>Heterodimer of a large and a small subunit.</text>
</comment>
<comment type="subcellular location">
    <subcellularLocation>
        <location>Cell membrane</location>
        <topology>Peripheral membrane protein</topology>
    </subcellularLocation>
</comment>
<comment type="similarity">
    <text evidence="3">Belongs to the [NiFe]/[NiFeSe] hydrogenase large subunit family.</text>
</comment>
<name>MBHL_ALCHY</name>
<gene>
    <name type="primary">hupL</name>
</gene>